<proteinExistence type="predicted"/>
<geneLocation type="plasmid">
    <name>IncP-alpha RP4</name>
</geneLocation>
<reference key="1">
    <citation type="journal article" date="1991" name="DNA Seq.">
        <title>Gene organization and nucleotide sequence of the primase region of IncP plasmids RP4 and R751.</title>
        <authorList>
            <person name="Miele L."/>
            <person name="Strack B."/>
            <person name="Kruft V."/>
            <person name="Lanka E."/>
        </authorList>
    </citation>
    <scope>NUCLEOTIDE SEQUENCE [GENOMIC DNA]</scope>
    <source>
        <strain>ATCC 33694 / HB101</strain>
    </source>
</reference>
<dbReference type="EMBL" id="X59793">
    <property type="protein sequence ID" value="CAA42458.1"/>
    <property type="molecule type" value="Genomic_DNA"/>
</dbReference>
<dbReference type="PIR" id="S37665">
    <property type="entry name" value="S37665"/>
</dbReference>
<dbReference type="RefSeq" id="WP_011205811.1">
    <property type="nucleotide sequence ID" value="NZ_VMTS01000048.1"/>
</dbReference>
<dbReference type="DIP" id="DIP-27654N"/>
<dbReference type="InterPro" id="IPR020497">
    <property type="entry name" value="DUF5440"/>
</dbReference>
<dbReference type="Pfam" id="PF17509">
    <property type="entry name" value="DUF5440"/>
    <property type="match status" value="1"/>
</dbReference>
<sequence>MNIEAYPHDFRGSLAVVSATGVAGCRTWTLRSVETGKHYELAPASIEGWPLPAKREDSRPNSIIVNYDGNDVIALELATGELYRTRAPATTLRLRR</sequence>
<accession>P27187</accession>
<protein>
    <recommendedName>
        <fullName>Protein TraA</fullName>
    </recommendedName>
</protein>
<feature type="chain" id="PRO_0000068592" description="Protein TraA">
    <location>
        <begin position="1"/>
        <end position="96"/>
    </location>
</feature>
<gene>
    <name type="primary">traA</name>
</gene>
<name>TRAA_ECOLX</name>
<keyword id="KW-0614">Plasmid</keyword>
<organism>
    <name type="scientific">Escherichia coli</name>
    <dbReference type="NCBI Taxonomy" id="562"/>
    <lineage>
        <taxon>Bacteria</taxon>
        <taxon>Pseudomonadati</taxon>
        <taxon>Pseudomonadota</taxon>
        <taxon>Gammaproteobacteria</taxon>
        <taxon>Enterobacterales</taxon>
        <taxon>Enterobacteriaceae</taxon>
        <taxon>Escherichia</taxon>
    </lineage>
</organism>